<sequence length="2298" mass="270175">MKGHQFKSWIFELREIVREIKNSHYFLDSWTQFNSVGSFIHIFFHQERFRKLLDPRILSILLSRNSQGSTSNRYFTIKSVVLFVVAALLYRINNRNMVESKNLYLKGLLPIPMNSIGPRNDTSEESFGSSNINRLIVSLLYLTKGKKISESCFRDPKESTWVLPITQKCIMPESNWSSRWWRNWIGKKRDFCCKISNETVAGIDISFKEKDIKYLEFLFVYYMDDPIRKGHDWELFDRLSPSKRRNIINLNSGQLFEILVKDWICYLMFAFREKIPIEVEGFFKQQGAGSTIQSNDIEHVSHLFSRNKWAISLQNCAQFHMWQFHQDLFVSWGKNPHESDFLRKISRENWIWLDNVWLVNKDRFFSKVRNVSSNIQYDSTRSSFVQVTDSSQLKGSSDQFIDHFDSISNEDSEYHYHTLINQREIQQLKERSILWDPSFIQTEGREIESDRFPKYLSGYSSMPRLFTEREKRMNNHLLPEESEEFIGNPTRPIRSFFSDRWSELHLGSNPTERSTRDQKLLKKEQDVSFVPSRRSENKEIVNIFKIIAYLQNTVSIHPISSDLGCDMVPKDELDMDSSNKISFLNKNPFFDLFHLFHERKRGGYTLRHDFESEERFQEMADLFTLSITEPDLVYHKGFAFSIDSYGLDQRQFLKEVFNSRDESKKKSLLVLPPIFYEENESFYRRIRQNWVRISCGNDLEDPKQKRVVFASNNIMEAGNQYRLIRNLIQIQFQYSPYGYIRNVLNRFFLMKRPDRNFEYGIQRDQIGNDTLNHRTIMKDTINQHLSNLKKSQKKWFDPLIFLSRTERSINRDPNAYRYKWSNGSKNFQEHLEHFVSERKSLFQVVFDRLCINQYSIDWSEVIDKKDLSKSLRFFLSKLLRFFLSKLLLFLSKLLLFLSNSLPFFFVSFENIPIHRSEIHIYELKGPNDQLCNQLLESIGLQIVHLKKLKPFLLDDHNTSQKSKFLINGGTISPFLFNKIPKWMIDSFHTRKNRRKSFDNTDSYFSMVSHDQDNWLNPLKPFQRSSLISSFSKANRLRFLNNPHHFCFYCNKRFPFYVEKARLNNYDFTYGQFLTILFIRNKIFSSCGGKKKHAFLERDTISPSPIESQVSNIFISNDFPQSGDERYNLYKSFHFPIRSDPLVRRAIYSIADISGTPLIEGQRVNFERTYCQTLSDMNLSDSEEKSLHQYLNFNSNMGLIHTPCSEKYLPSEKRKKWSLCLKKCVDKGQMDRTFQRDSAFSTLSKWNLFQTYMPWFFTSTGYKYLNLIFLDTFSDLLRILSSSPKFVSIFHDIMHGLDISWRILQKKLCLPQRNLISEISSKSLHNLLLSEEMIHRNNESSLISTHLRSPNVREVLYSILFLLLVAGYIVRTHLLFVSRAYSELQTEFEKIKSLMIPSYMIELRKLLDRYPTSELNSFWLKNLFLVALEQLGDCLEEIRGSGGNMLWGGDPAYGVKSIRSKKKDLNINFIDIIDLISIIPNPINRITFSRNTRHLSHTSKEIYSLIRKRKNVSGDWIDDKIESWVANSDSIDDKEREFLVQFSTLRAEKRIDQILLSLTHSDHLSKNDSGYQMIEQPGTIYLRYLVDIHKKYLMNYEFNTSCLAERRIFLAHYQTITYSQTSCGANSFHFPSHGKPFSLRLALSPSRSILVIGSIGTGRSYLVKYLATTSYVPFITVFLNKFLDNKPKGFFIDDIDIDDSDDIDASNDIDRELDTELELLTMMNALTMDMMSEIDRFYITLQFELAKAMSPCIIWIPNIHDLDVNESNYLALGLLVNSLSRDCERCSTRNILVIASTHIPQKVDPALIAPNKLNTCIKIRRLLIPQQRKHFFTLSYTRGFHLEKKMFHTNGFESITMGSSARDLVALTNEALSISITQKKSIIDTNTIRSALHRQTWDLRSQVRSVQDHGILFYQIGRAVAQNVLISNCPIDPISIYMKKKSCNEGDSYLYKWYFELGTSMKKFTILLYLLSCSAGSVAQDLWSLPGPDEKNRITSYGFVENDSDLVHGLLEVQGALVGSSRTEKDCSQFDNDRVTLLFRSEPRNPLYMMQNGSCSIVDQRFLYEKYESEFEEGEGEGVLDPQQIEEDLFNHIVWAPRIWRPRGFLFDCIERPNELGFPYLAGSFRGKRIIYDEKYELQENDSEFLQSGTMQYQRRDRSSKEQGFFRISQFIWDPADPLFFLFKDQPFVSVFSHREFFADEEMSKGLFTSQTDPPTSIYKRWFIKNTQEKHFELLIQRQRWLRTNSSLSNGFFRSNTLSESYQYLSNLFLSNGTLLDRMTKTLLKKRWLFPDEMKIGFM</sequence>
<reference key="1">
    <citation type="submission" date="2007-03" db="EMBL/GenBank/DDBJ databases">
        <title>Sequencing analysis of Aethionema coridifolium chloroplast DNA.</title>
        <authorList>
            <person name="Hosouchi T."/>
            <person name="Tsuruoka H."/>
            <person name="Kotani H."/>
        </authorList>
    </citation>
    <scope>NUCLEOTIDE SEQUENCE [LARGE SCALE GENOMIC DNA]</scope>
</reference>
<accession>A4QJF8</accession>
<feature type="chain" id="PRO_0000343755" description="Protein Ycf2">
    <location>
        <begin position="1"/>
        <end position="2298"/>
    </location>
</feature>
<feature type="binding site" evidence="1">
    <location>
        <begin position="1652"/>
        <end position="1659"/>
    </location>
    <ligand>
        <name>ATP</name>
        <dbReference type="ChEBI" id="CHEBI:30616"/>
    </ligand>
</feature>
<name>YCF2_AETCO</name>
<geneLocation type="chloroplast"/>
<evidence type="ECO:0000255" key="1">
    <source>
        <dbReference type="HAMAP-Rule" id="MF_01330"/>
    </source>
</evidence>
<organism>
    <name type="scientific">Aethionema cordifolium</name>
    <name type="common">Lebanon stonecress</name>
    <dbReference type="NCBI Taxonomy" id="434059"/>
    <lineage>
        <taxon>Eukaryota</taxon>
        <taxon>Viridiplantae</taxon>
        <taxon>Streptophyta</taxon>
        <taxon>Embryophyta</taxon>
        <taxon>Tracheophyta</taxon>
        <taxon>Spermatophyta</taxon>
        <taxon>Magnoliopsida</taxon>
        <taxon>eudicotyledons</taxon>
        <taxon>Gunneridae</taxon>
        <taxon>Pentapetalae</taxon>
        <taxon>rosids</taxon>
        <taxon>malvids</taxon>
        <taxon>Brassicales</taxon>
        <taxon>Brassicaceae</taxon>
        <taxon>Aethionemeae</taxon>
        <taxon>Aethionema</taxon>
    </lineage>
</organism>
<comment type="function">
    <text evidence="1">Probable ATPase of unknown function. Its presence in a non-photosynthetic plant (Epifagus virginiana) and experiments in tobacco indicate that it has an essential function which is probably not related to photosynthesis.</text>
</comment>
<comment type="subcellular location">
    <subcellularLocation>
        <location evidence="1">Plastid</location>
        <location evidence="1">Chloroplast stroma</location>
    </subcellularLocation>
</comment>
<comment type="similarity">
    <text evidence="1">Belongs to the Ycf2 family.</text>
</comment>
<proteinExistence type="inferred from homology"/>
<gene>
    <name evidence="1" type="primary">ycf2-A</name>
</gene>
<gene>
    <name evidence="1" type="primary">ycf2-B</name>
</gene>
<dbReference type="EMBL" id="AP009366">
    <property type="protein sequence ID" value="BAF49813.1"/>
    <property type="molecule type" value="Genomic_DNA"/>
</dbReference>
<dbReference type="EMBL" id="AP009366">
    <property type="protein sequence ID" value="BAF49832.1"/>
    <property type="molecule type" value="Genomic_DNA"/>
</dbReference>
<dbReference type="GO" id="GO:0009570">
    <property type="term" value="C:chloroplast stroma"/>
    <property type="evidence" value="ECO:0007669"/>
    <property type="project" value="UniProtKB-SubCell"/>
</dbReference>
<dbReference type="GO" id="GO:0005524">
    <property type="term" value="F:ATP binding"/>
    <property type="evidence" value="ECO:0007669"/>
    <property type="project" value="UniProtKB-KW"/>
</dbReference>
<dbReference type="GO" id="GO:0016887">
    <property type="term" value="F:ATP hydrolysis activity"/>
    <property type="evidence" value="ECO:0007669"/>
    <property type="project" value="InterPro"/>
</dbReference>
<dbReference type="CDD" id="cd19505">
    <property type="entry name" value="RecA-like_Ycf2"/>
    <property type="match status" value="1"/>
</dbReference>
<dbReference type="Gene3D" id="3.40.50.300">
    <property type="entry name" value="P-loop containing nucleotide triphosphate hydrolases"/>
    <property type="match status" value="1"/>
</dbReference>
<dbReference type="HAMAP" id="MF_01330">
    <property type="entry name" value="Ycf2"/>
    <property type="match status" value="1"/>
</dbReference>
<dbReference type="InterPro" id="IPR003593">
    <property type="entry name" value="AAA+_ATPase"/>
</dbReference>
<dbReference type="InterPro" id="IPR003959">
    <property type="entry name" value="ATPase_AAA_core"/>
</dbReference>
<dbReference type="InterPro" id="IPR027417">
    <property type="entry name" value="P-loop_NTPase"/>
</dbReference>
<dbReference type="InterPro" id="IPR008543">
    <property type="entry name" value="Uncharacterised_Ycf2"/>
</dbReference>
<dbReference type="InterPro" id="IPR056777">
    <property type="entry name" value="Ycf2_N"/>
</dbReference>
<dbReference type="PANTHER" id="PTHR33078:SF89">
    <property type="entry name" value="PROTEIN YCF2"/>
    <property type="match status" value="1"/>
</dbReference>
<dbReference type="PANTHER" id="PTHR33078">
    <property type="entry name" value="PROTEIN YCF2-RELATED"/>
    <property type="match status" value="1"/>
</dbReference>
<dbReference type="Pfam" id="PF00004">
    <property type="entry name" value="AAA"/>
    <property type="match status" value="1"/>
</dbReference>
<dbReference type="Pfam" id="PF05695">
    <property type="entry name" value="Ycf2"/>
    <property type="match status" value="1"/>
</dbReference>
<dbReference type="SMART" id="SM00382">
    <property type="entry name" value="AAA"/>
    <property type="match status" value="1"/>
</dbReference>
<dbReference type="SUPFAM" id="SSF52540">
    <property type="entry name" value="P-loop containing nucleoside triphosphate hydrolases"/>
    <property type="match status" value="1"/>
</dbReference>
<protein>
    <recommendedName>
        <fullName evidence="1">Protein Ycf2</fullName>
    </recommendedName>
</protein>
<keyword id="KW-0067">ATP-binding</keyword>
<keyword id="KW-0150">Chloroplast</keyword>
<keyword id="KW-0547">Nucleotide-binding</keyword>
<keyword id="KW-0934">Plastid</keyword>